<evidence type="ECO:0000255" key="1">
    <source>
        <dbReference type="HAMAP-Rule" id="MF_00050"/>
    </source>
</evidence>
<feature type="chain" id="PRO_1000006101" description="Elongation factor Ts">
    <location>
        <begin position="1"/>
        <end position="274"/>
    </location>
</feature>
<feature type="region of interest" description="Involved in Mg(2+) ion dislocation from EF-Tu" evidence="1">
    <location>
        <begin position="82"/>
        <end position="85"/>
    </location>
</feature>
<gene>
    <name evidence="1" type="primary">tsf</name>
    <name type="ordered locus">GFO_0133</name>
</gene>
<keyword id="KW-0963">Cytoplasm</keyword>
<keyword id="KW-0251">Elongation factor</keyword>
<keyword id="KW-0648">Protein biosynthesis</keyword>
<dbReference type="EMBL" id="CU207366">
    <property type="protein sequence ID" value="CAL65122.1"/>
    <property type="molecule type" value="Genomic_DNA"/>
</dbReference>
<dbReference type="RefSeq" id="WP_011708060.1">
    <property type="nucleotide sequence ID" value="NC_008571.1"/>
</dbReference>
<dbReference type="SMR" id="A0LXM7"/>
<dbReference type="STRING" id="411154.GFO_0133"/>
<dbReference type="KEGG" id="gfo:GFO_0133"/>
<dbReference type="eggNOG" id="COG0264">
    <property type="taxonomic scope" value="Bacteria"/>
</dbReference>
<dbReference type="HOGENOM" id="CLU_047155_0_0_10"/>
<dbReference type="OrthoDB" id="9808348at2"/>
<dbReference type="Proteomes" id="UP000000755">
    <property type="component" value="Chromosome"/>
</dbReference>
<dbReference type="GO" id="GO:0005737">
    <property type="term" value="C:cytoplasm"/>
    <property type="evidence" value="ECO:0007669"/>
    <property type="project" value="UniProtKB-SubCell"/>
</dbReference>
<dbReference type="GO" id="GO:0003746">
    <property type="term" value="F:translation elongation factor activity"/>
    <property type="evidence" value="ECO:0007669"/>
    <property type="project" value="UniProtKB-UniRule"/>
</dbReference>
<dbReference type="CDD" id="cd14275">
    <property type="entry name" value="UBA_EF-Ts"/>
    <property type="match status" value="1"/>
</dbReference>
<dbReference type="FunFam" id="1.10.8.10:FF:000001">
    <property type="entry name" value="Elongation factor Ts"/>
    <property type="match status" value="1"/>
</dbReference>
<dbReference type="Gene3D" id="1.10.286.20">
    <property type="match status" value="1"/>
</dbReference>
<dbReference type="Gene3D" id="1.10.8.10">
    <property type="entry name" value="DNA helicase RuvA subunit, C-terminal domain"/>
    <property type="match status" value="1"/>
</dbReference>
<dbReference type="Gene3D" id="3.30.479.20">
    <property type="entry name" value="Elongation factor Ts, dimerisation domain"/>
    <property type="match status" value="2"/>
</dbReference>
<dbReference type="HAMAP" id="MF_00050">
    <property type="entry name" value="EF_Ts"/>
    <property type="match status" value="1"/>
</dbReference>
<dbReference type="InterPro" id="IPR036402">
    <property type="entry name" value="EF-Ts_dimer_sf"/>
</dbReference>
<dbReference type="InterPro" id="IPR001816">
    <property type="entry name" value="Transl_elong_EFTs/EF1B"/>
</dbReference>
<dbReference type="InterPro" id="IPR014039">
    <property type="entry name" value="Transl_elong_EFTs/EF1B_dimer"/>
</dbReference>
<dbReference type="InterPro" id="IPR018101">
    <property type="entry name" value="Transl_elong_Ts_CS"/>
</dbReference>
<dbReference type="InterPro" id="IPR009060">
    <property type="entry name" value="UBA-like_sf"/>
</dbReference>
<dbReference type="NCBIfam" id="TIGR00116">
    <property type="entry name" value="tsf"/>
    <property type="match status" value="1"/>
</dbReference>
<dbReference type="PANTHER" id="PTHR11741">
    <property type="entry name" value="ELONGATION FACTOR TS"/>
    <property type="match status" value="1"/>
</dbReference>
<dbReference type="PANTHER" id="PTHR11741:SF0">
    <property type="entry name" value="ELONGATION FACTOR TS, MITOCHONDRIAL"/>
    <property type="match status" value="1"/>
</dbReference>
<dbReference type="Pfam" id="PF00889">
    <property type="entry name" value="EF_TS"/>
    <property type="match status" value="1"/>
</dbReference>
<dbReference type="SUPFAM" id="SSF54713">
    <property type="entry name" value="Elongation factor Ts (EF-Ts), dimerisation domain"/>
    <property type="match status" value="1"/>
</dbReference>
<dbReference type="SUPFAM" id="SSF46934">
    <property type="entry name" value="UBA-like"/>
    <property type="match status" value="1"/>
</dbReference>
<dbReference type="PROSITE" id="PS01126">
    <property type="entry name" value="EF_TS_1"/>
    <property type="match status" value="1"/>
</dbReference>
<dbReference type="PROSITE" id="PS01127">
    <property type="entry name" value="EF_TS_2"/>
    <property type="match status" value="1"/>
</dbReference>
<organism>
    <name type="scientific">Christiangramia forsetii (strain DSM 17595 / CGMCC 1.15422 / KT0803)</name>
    <name type="common">Gramella forsetii</name>
    <dbReference type="NCBI Taxonomy" id="411154"/>
    <lineage>
        <taxon>Bacteria</taxon>
        <taxon>Pseudomonadati</taxon>
        <taxon>Bacteroidota</taxon>
        <taxon>Flavobacteriia</taxon>
        <taxon>Flavobacteriales</taxon>
        <taxon>Flavobacteriaceae</taxon>
        <taxon>Christiangramia</taxon>
    </lineage>
</organism>
<comment type="function">
    <text evidence="1">Associates with the EF-Tu.GDP complex and induces the exchange of GDP to GTP. It remains bound to the aminoacyl-tRNA.EF-Tu.GTP complex up to the GTP hydrolysis stage on the ribosome.</text>
</comment>
<comment type="subcellular location">
    <subcellularLocation>
        <location evidence="1">Cytoplasm</location>
    </subcellularLocation>
</comment>
<comment type="similarity">
    <text evidence="1">Belongs to the EF-Ts family.</text>
</comment>
<name>EFTS_CHRFK</name>
<reference key="1">
    <citation type="journal article" date="2006" name="Environ. Microbiol.">
        <title>Whole genome analysis of the marine Bacteroidetes'Gramella forsetii' reveals adaptations to degradation of polymeric organic matter.</title>
        <authorList>
            <person name="Bauer M."/>
            <person name="Kube M."/>
            <person name="Teeling H."/>
            <person name="Richter M."/>
            <person name="Lombardot T."/>
            <person name="Allers E."/>
            <person name="Wuerdemann C.A."/>
            <person name="Quast C."/>
            <person name="Kuhl H."/>
            <person name="Knaust F."/>
            <person name="Woebken D."/>
            <person name="Bischof K."/>
            <person name="Mussmann M."/>
            <person name="Choudhuri J.V."/>
            <person name="Meyer F."/>
            <person name="Reinhardt R."/>
            <person name="Amann R.I."/>
            <person name="Gloeckner F.O."/>
        </authorList>
    </citation>
    <scope>NUCLEOTIDE SEQUENCE [LARGE SCALE GENOMIC DNA]</scope>
    <source>
        <strain>DSM 17595 / CGMCC 1.15422 / KT0803</strain>
    </source>
</reference>
<protein>
    <recommendedName>
        <fullName evidence="1">Elongation factor Ts</fullName>
        <shortName evidence="1">EF-Ts</shortName>
    </recommendedName>
</protein>
<accession>A0LXM7</accession>
<sequence>MAKITAAEVNKLRKATGAGMMDCKKALVEAEGDFDGAIELLRKKGQKVAAKRADRDSSEGAAIAQVNGDNTKGVIISLNCETDFVAKNDDFIKMANNFAEIALNYSSKEEFLKADYKGISVEDKLTEQTGVIGEKIEIGAFRTLEAPFVGSYIHAGNKIAVLTGLSKSVDGAEEAAKNVSMQAAAMNPVALNEEGVDQGTIDKEIEIAKDTLREEGKPENMLDKIAQGKLQRFFKDNTLVHQAYIKDNKQSVADYVKTVDGALEVVAFERVALG</sequence>
<proteinExistence type="inferred from homology"/>